<gene>
    <name evidence="1" type="primary">rnc</name>
    <name type="ordered locus">NMV_1713</name>
</gene>
<keyword id="KW-0963">Cytoplasm</keyword>
<keyword id="KW-0255">Endonuclease</keyword>
<keyword id="KW-0378">Hydrolase</keyword>
<keyword id="KW-0460">Magnesium</keyword>
<keyword id="KW-0479">Metal-binding</keyword>
<keyword id="KW-0507">mRNA processing</keyword>
<keyword id="KW-0540">Nuclease</keyword>
<keyword id="KW-0694">RNA-binding</keyword>
<keyword id="KW-0698">rRNA processing</keyword>
<keyword id="KW-0699">rRNA-binding</keyword>
<keyword id="KW-0819">tRNA processing</keyword>
<reference key="1">
    <citation type="journal article" date="2009" name="Genome Biol.">
        <title>NeMeSys: a biological resource for narrowing the gap between sequence and function in the human pathogen Neisseria meningitidis.</title>
        <authorList>
            <person name="Rusniok C."/>
            <person name="Vallenet D."/>
            <person name="Floquet S."/>
            <person name="Ewles H."/>
            <person name="Mouze-Soulama C."/>
            <person name="Brown D."/>
            <person name="Lajus A."/>
            <person name="Buchrieser C."/>
            <person name="Medigue C."/>
            <person name="Glaser P."/>
            <person name="Pelicic V."/>
        </authorList>
    </citation>
    <scope>NUCLEOTIDE SEQUENCE [LARGE SCALE GENOMIC DNA]</scope>
    <source>
        <strain>8013</strain>
    </source>
</reference>
<reference key="2">
    <citation type="journal article" date="2013" name="Mol. Cell">
        <title>Processing-independent CRISPR RNAs limit natural transformation in Neisseria meningitidis.</title>
        <authorList>
            <person name="Zhang Y."/>
            <person name="Heidrich N."/>
            <person name="Ampattu B.J."/>
            <person name="Gunderson C.W."/>
            <person name="Seifert H.S."/>
            <person name="Schoen C."/>
            <person name="Vogel J."/>
            <person name="Sontheimer E.J."/>
        </authorList>
    </citation>
    <scope>FUNCTION</scope>
    <scope>DISRUPTION PHENOTYPE</scope>
    <source>
        <strain>8013</strain>
    </source>
</reference>
<proteinExistence type="inferred from homology"/>
<accession>C9X0M5</accession>
<comment type="function">
    <text evidence="2">Digests double-stranded RNA. Involved in the processing of primary rRNA transcript to yield the immediate precursors to the large and small rRNAs (23S and 16S). Also processes some mRNAs, and tRNAs when they are encoded in the rRNA operon.</text>
</comment>
<comment type="function">
    <text evidence="2">CRISPR (clustered regularly interspaced short palindromic repeat) is an adaptive immune system that provides protection against mobile genetic elements (viruses, transposable elements and conjugative plasmids). CRISPR clusters contain spacers, sequences complementary to antecedent mobile elements, and target invading nucleic acids. CRISPR clusters are transcribed and processed into CRISPR RNA (crRNA). In this organism endogenous ribonuclease 3 and Cas9 are required for correct coprocessing of pre-crRNA and the trans-encoded small RNA (tracrRNA). Cas9, crRNA and tracRNA are required for cleavage of invading DNA. Involved in 3'-end processing but not 5'-end processing of crRNA and tracrRNA (PubMed:23706818).</text>
</comment>
<comment type="catalytic activity">
    <reaction evidence="1">
        <text>Endonucleolytic cleavage to 5'-phosphomonoester.</text>
        <dbReference type="EC" id="3.1.26.3"/>
    </reaction>
</comment>
<comment type="cofactor">
    <cofactor evidence="1">
        <name>Mg(2+)</name>
        <dbReference type="ChEBI" id="CHEBI:18420"/>
    </cofactor>
</comment>
<comment type="subunit">
    <text evidence="1">Homodimer.</text>
</comment>
<comment type="subcellular location">
    <subcellularLocation>
        <location evidence="1">Cytoplasm</location>
    </subcellularLocation>
</comment>
<comment type="disruption phenotype">
    <text evidence="2">Altered processing of 3' end of CRISPR crRNA and tracrRNA, but no effect on CRISPR interference during plasmid transformation.</text>
</comment>
<comment type="similarity">
    <text evidence="1">Belongs to the ribonuclease III family.</text>
</comment>
<dbReference type="EC" id="3.1.26.3" evidence="1"/>
<dbReference type="EMBL" id="FM999788">
    <property type="protein sequence ID" value="CAX50526.1"/>
    <property type="molecule type" value="Genomic_DNA"/>
</dbReference>
<dbReference type="RefSeq" id="WP_002225498.1">
    <property type="nucleotide sequence ID" value="NC_017501.1"/>
</dbReference>
<dbReference type="SMR" id="C9X0M5"/>
<dbReference type="KEGG" id="nmt:NMV_1713"/>
<dbReference type="PATRIC" id="fig|604162.3.peg.2008"/>
<dbReference type="HOGENOM" id="CLU_000907_1_1_4"/>
<dbReference type="Proteomes" id="UP000002076">
    <property type="component" value="Chromosome"/>
</dbReference>
<dbReference type="GO" id="GO:0005737">
    <property type="term" value="C:cytoplasm"/>
    <property type="evidence" value="ECO:0007669"/>
    <property type="project" value="UniProtKB-SubCell"/>
</dbReference>
<dbReference type="GO" id="GO:0003725">
    <property type="term" value="F:double-stranded RNA binding"/>
    <property type="evidence" value="ECO:0007669"/>
    <property type="project" value="TreeGrafter"/>
</dbReference>
<dbReference type="GO" id="GO:0046872">
    <property type="term" value="F:metal ion binding"/>
    <property type="evidence" value="ECO:0007669"/>
    <property type="project" value="UniProtKB-KW"/>
</dbReference>
<dbReference type="GO" id="GO:0004525">
    <property type="term" value="F:ribonuclease III activity"/>
    <property type="evidence" value="ECO:0007669"/>
    <property type="project" value="UniProtKB-UniRule"/>
</dbReference>
<dbReference type="GO" id="GO:0019843">
    <property type="term" value="F:rRNA binding"/>
    <property type="evidence" value="ECO:0007669"/>
    <property type="project" value="UniProtKB-KW"/>
</dbReference>
<dbReference type="GO" id="GO:0006397">
    <property type="term" value="P:mRNA processing"/>
    <property type="evidence" value="ECO:0007669"/>
    <property type="project" value="UniProtKB-UniRule"/>
</dbReference>
<dbReference type="GO" id="GO:0010468">
    <property type="term" value="P:regulation of gene expression"/>
    <property type="evidence" value="ECO:0007669"/>
    <property type="project" value="TreeGrafter"/>
</dbReference>
<dbReference type="GO" id="GO:0006364">
    <property type="term" value="P:rRNA processing"/>
    <property type="evidence" value="ECO:0007669"/>
    <property type="project" value="UniProtKB-UniRule"/>
</dbReference>
<dbReference type="GO" id="GO:0008033">
    <property type="term" value="P:tRNA processing"/>
    <property type="evidence" value="ECO:0007669"/>
    <property type="project" value="UniProtKB-KW"/>
</dbReference>
<dbReference type="CDD" id="cd00593">
    <property type="entry name" value="RIBOc"/>
    <property type="match status" value="1"/>
</dbReference>
<dbReference type="FunFam" id="1.10.1520.10:FF:000001">
    <property type="entry name" value="Ribonuclease 3"/>
    <property type="match status" value="1"/>
</dbReference>
<dbReference type="Gene3D" id="3.30.160.20">
    <property type="match status" value="1"/>
</dbReference>
<dbReference type="Gene3D" id="1.10.1520.10">
    <property type="entry name" value="Ribonuclease III domain"/>
    <property type="match status" value="1"/>
</dbReference>
<dbReference type="HAMAP" id="MF_00104">
    <property type="entry name" value="RNase_III"/>
    <property type="match status" value="1"/>
</dbReference>
<dbReference type="InterPro" id="IPR014720">
    <property type="entry name" value="dsRBD_dom"/>
</dbReference>
<dbReference type="InterPro" id="IPR011907">
    <property type="entry name" value="RNase_III"/>
</dbReference>
<dbReference type="InterPro" id="IPR000999">
    <property type="entry name" value="RNase_III_dom"/>
</dbReference>
<dbReference type="InterPro" id="IPR036389">
    <property type="entry name" value="RNase_III_sf"/>
</dbReference>
<dbReference type="NCBIfam" id="TIGR02191">
    <property type="entry name" value="RNaseIII"/>
    <property type="match status" value="1"/>
</dbReference>
<dbReference type="PANTHER" id="PTHR11207:SF0">
    <property type="entry name" value="RIBONUCLEASE 3"/>
    <property type="match status" value="1"/>
</dbReference>
<dbReference type="PANTHER" id="PTHR11207">
    <property type="entry name" value="RIBONUCLEASE III"/>
    <property type="match status" value="1"/>
</dbReference>
<dbReference type="Pfam" id="PF00035">
    <property type="entry name" value="dsrm"/>
    <property type="match status" value="1"/>
</dbReference>
<dbReference type="Pfam" id="PF14622">
    <property type="entry name" value="Ribonucleas_3_3"/>
    <property type="match status" value="1"/>
</dbReference>
<dbReference type="SMART" id="SM00358">
    <property type="entry name" value="DSRM"/>
    <property type="match status" value="1"/>
</dbReference>
<dbReference type="SMART" id="SM00535">
    <property type="entry name" value="RIBOc"/>
    <property type="match status" value="1"/>
</dbReference>
<dbReference type="SUPFAM" id="SSF54768">
    <property type="entry name" value="dsRNA-binding domain-like"/>
    <property type="match status" value="1"/>
</dbReference>
<dbReference type="SUPFAM" id="SSF69065">
    <property type="entry name" value="RNase III domain-like"/>
    <property type="match status" value="1"/>
</dbReference>
<dbReference type="PROSITE" id="PS50137">
    <property type="entry name" value="DS_RBD"/>
    <property type="match status" value="1"/>
</dbReference>
<dbReference type="PROSITE" id="PS00517">
    <property type="entry name" value="RNASE_3_1"/>
    <property type="match status" value="1"/>
</dbReference>
<dbReference type="PROSITE" id="PS50142">
    <property type="entry name" value="RNASE_3_2"/>
    <property type="match status" value="1"/>
</dbReference>
<protein>
    <recommendedName>
        <fullName evidence="1">Ribonuclease 3</fullName>
        <ecNumber evidence="1">3.1.26.3</ecNumber>
    </recommendedName>
    <alternativeName>
        <fullName evidence="1">Ribonuclease III</fullName>
    </alternativeName>
</protein>
<organism>
    <name type="scientific">Neisseria meningitidis serogroup C (strain 8013)</name>
    <dbReference type="NCBI Taxonomy" id="604162"/>
    <lineage>
        <taxon>Bacteria</taxon>
        <taxon>Pseudomonadati</taxon>
        <taxon>Pseudomonadota</taxon>
        <taxon>Betaproteobacteria</taxon>
        <taxon>Neisseriales</taxon>
        <taxon>Neisseriaceae</taxon>
        <taxon>Neisseria</taxon>
    </lineage>
</organism>
<feature type="chain" id="PRO_0000429990" description="Ribonuclease 3">
    <location>
        <begin position="1"/>
        <end position="239"/>
    </location>
</feature>
<feature type="domain" description="RNase III" evidence="1">
    <location>
        <begin position="11"/>
        <end position="133"/>
    </location>
</feature>
<feature type="domain" description="DRBM" evidence="1">
    <location>
        <begin position="160"/>
        <end position="230"/>
    </location>
</feature>
<feature type="active site" evidence="1">
    <location>
        <position position="50"/>
    </location>
</feature>
<feature type="binding site" evidence="1">
    <location>
        <position position="46"/>
    </location>
    <ligand>
        <name>Mg(2+)</name>
        <dbReference type="ChEBI" id="CHEBI:18420"/>
    </ligand>
</feature>
<feature type="binding site" evidence="1">
    <location>
        <position position="119"/>
    </location>
    <ligand>
        <name>Mg(2+)</name>
        <dbReference type="ChEBI" id="CHEBI:18420"/>
    </ligand>
</feature>
<feature type="binding site" evidence="1">
    <location>
        <position position="122"/>
    </location>
    <ligand>
        <name>Mg(2+)</name>
        <dbReference type="ChEBI" id="CHEBI:18420"/>
    </ligand>
</feature>
<evidence type="ECO:0000255" key="1">
    <source>
        <dbReference type="HAMAP-Rule" id="MF_00104"/>
    </source>
</evidence>
<evidence type="ECO:0000269" key="2">
    <source>
    </source>
</evidence>
<name>RNC_NEIM8</name>
<sequence length="239" mass="26853">MKDDVLKQQAHAAIQKKLGYAFRDISLLRQALTHRSHHAKHNERFEFVGDSILNYTVARMLFDAFPKLTEGELSRLRASLVNEGVLAEMAAEMNVGDGLYLGAGELKSGGFRRPSILADAMEAMFAAVSFDADFNTAEKVVRHLFADRVRRADFQNQAKDGKTALQEALQARRFALPKYRIEEQIGYANDSMFVISCDLGELGFVCRAKGTSRKAAEQEAAKEALKWLEEKLPLKRKKK</sequence>